<accession>Q8DU23</accession>
<name>PSTB2_STRMU</name>
<sequence>MTEYNWNERHIITFPEEILALSTKDLHVYYGEKEAIKGIDMQFKKKKITALIGPSGCGKSTFLRSLNRMNDTIDIAKVTGQILFEGIDVNAANINVYEMRKHIGMVFQRPNPFAKSIYKNITFAYERAGVKDKQFLDDIVETSLKQAALWEQVKDDLHKSAFTLSGGQQQRLCIARAIAVKPDILLMDEPASALDPIATMQLEETMSELKENYTIIIVTHNMQQAARASDYTAFFYLGDLIEYDKTNNIFQNAKLQSTSDYVSGHFG</sequence>
<organism>
    <name type="scientific">Streptococcus mutans serotype c (strain ATCC 700610 / UA159)</name>
    <dbReference type="NCBI Taxonomy" id="210007"/>
    <lineage>
        <taxon>Bacteria</taxon>
        <taxon>Bacillati</taxon>
        <taxon>Bacillota</taxon>
        <taxon>Bacilli</taxon>
        <taxon>Lactobacillales</taxon>
        <taxon>Streptococcaceae</taxon>
        <taxon>Streptococcus</taxon>
    </lineage>
</organism>
<protein>
    <recommendedName>
        <fullName evidence="1">Phosphate import ATP-binding protein PstB 2</fullName>
        <ecNumber evidence="1">7.3.2.1</ecNumber>
    </recommendedName>
    <alternativeName>
        <fullName evidence="1">ABC phosphate transporter 2</fullName>
    </alternativeName>
    <alternativeName>
        <fullName evidence="1">Phosphate-transporting ATPase 2</fullName>
    </alternativeName>
</protein>
<proteinExistence type="inferred from homology"/>
<comment type="function">
    <text evidence="1">Part of the ABC transporter complex PstSACB involved in phosphate import. Responsible for energy coupling to the transport system.</text>
</comment>
<comment type="catalytic activity">
    <reaction evidence="1">
        <text>phosphate(out) + ATP + H2O = ADP + 2 phosphate(in) + H(+)</text>
        <dbReference type="Rhea" id="RHEA:24440"/>
        <dbReference type="ChEBI" id="CHEBI:15377"/>
        <dbReference type="ChEBI" id="CHEBI:15378"/>
        <dbReference type="ChEBI" id="CHEBI:30616"/>
        <dbReference type="ChEBI" id="CHEBI:43474"/>
        <dbReference type="ChEBI" id="CHEBI:456216"/>
        <dbReference type="EC" id="7.3.2.1"/>
    </reaction>
</comment>
<comment type="subunit">
    <text evidence="1">The complex is composed of two ATP-binding proteins (PstB), two transmembrane proteins (PstC and PstA) and a solute-binding protein (PstS).</text>
</comment>
<comment type="subcellular location">
    <subcellularLocation>
        <location evidence="1">Cell membrane</location>
        <topology evidence="1">Peripheral membrane protein</topology>
    </subcellularLocation>
</comment>
<comment type="similarity">
    <text evidence="1">Belongs to the ABC transporter superfamily. Phosphate importer (TC 3.A.1.7) family.</text>
</comment>
<reference key="1">
    <citation type="journal article" date="2002" name="Proc. Natl. Acad. Sci. U.S.A.">
        <title>Genome sequence of Streptococcus mutans UA159, a cariogenic dental pathogen.</title>
        <authorList>
            <person name="Ajdic D.J."/>
            <person name="McShan W.M."/>
            <person name="McLaughlin R.E."/>
            <person name="Savic G."/>
            <person name="Chang J."/>
            <person name="Carson M.B."/>
            <person name="Primeaux C."/>
            <person name="Tian R."/>
            <person name="Kenton S."/>
            <person name="Jia H.G."/>
            <person name="Lin S.P."/>
            <person name="Qian Y."/>
            <person name="Li S."/>
            <person name="Zhu H."/>
            <person name="Najar F.Z."/>
            <person name="Lai H."/>
            <person name="White J."/>
            <person name="Roe B.A."/>
            <person name="Ferretti J.J."/>
        </authorList>
    </citation>
    <scope>NUCLEOTIDE SEQUENCE [LARGE SCALE GENOMIC DNA]</scope>
    <source>
        <strain>ATCC 700610 / UA159</strain>
    </source>
</reference>
<evidence type="ECO:0000255" key="1">
    <source>
        <dbReference type="HAMAP-Rule" id="MF_01702"/>
    </source>
</evidence>
<gene>
    <name evidence="1" type="primary">pstB2</name>
    <name type="synonym">pstB</name>
    <name type="ordered locus">SMU_1135</name>
</gene>
<dbReference type="EC" id="7.3.2.1" evidence="1"/>
<dbReference type="EMBL" id="AE014133">
    <property type="protein sequence ID" value="AAN58827.1"/>
    <property type="molecule type" value="Genomic_DNA"/>
</dbReference>
<dbReference type="RefSeq" id="NP_721521.1">
    <property type="nucleotide sequence ID" value="NC_004350.2"/>
</dbReference>
<dbReference type="RefSeq" id="WP_002262209.1">
    <property type="nucleotide sequence ID" value="NC_004350.2"/>
</dbReference>
<dbReference type="SMR" id="Q8DU23"/>
<dbReference type="STRING" id="210007.SMU_1135"/>
<dbReference type="GeneID" id="93859374"/>
<dbReference type="KEGG" id="smu:SMU_1135"/>
<dbReference type="PATRIC" id="fig|210007.7.peg.1017"/>
<dbReference type="eggNOG" id="COG1117">
    <property type="taxonomic scope" value="Bacteria"/>
</dbReference>
<dbReference type="HOGENOM" id="CLU_000604_1_22_9"/>
<dbReference type="OrthoDB" id="9802185at2"/>
<dbReference type="PhylomeDB" id="Q8DU23"/>
<dbReference type="Proteomes" id="UP000002512">
    <property type="component" value="Chromosome"/>
</dbReference>
<dbReference type="GO" id="GO:0005886">
    <property type="term" value="C:plasma membrane"/>
    <property type="evidence" value="ECO:0007669"/>
    <property type="project" value="UniProtKB-SubCell"/>
</dbReference>
<dbReference type="GO" id="GO:0005524">
    <property type="term" value="F:ATP binding"/>
    <property type="evidence" value="ECO:0007669"/>
    <property type="project" value="UniProtKB-KW"/>
</dbReference>
<dbReference type="GO" id="GO:0016887">
    <property type="term" value="F:ATP hydrolysis activity"/>
    <property type="evidence" value="ECO:0007669"/>
    <property type="project" value="InterPro"/>
</dbReference>
<dbReference type="GO" id="GO:0015415">
    <property type="term" value="F:ATPase-coupled phosphate ion transmembrane transporter activity"/>
    <property type="evidence" value="ECO:0007669"/>
    <property type="project" value="UniProtKB-EC"/>
</dbReference>
<dbReference type="GO" id="GO:0035435">
    <property type="term" value="P:phosphate ion transmembrane transport"/>
    <property type="evidence" value="ECO:0007669"/>
    <property type="project" value="InterPro"/>
</dbReference>
<dbReference type="CDD" id="cd03260">
    <property type="entry name" value="ABC_PstB_phosphate_transporter"/>
    <property type="match status" value="1"/>
</dbReference>
<dbReference type="Gene3D" id="3.40.50.300">
    <property type="entry name" value="P-loop containing nucleotide triphosphate hydrolases"/>
    <property type="match status" value="1"/>
</dbReference>
<dbReference type="InterPro" id="IPR003593">
    <property type="entry name" value="AAA+_ATPase"/>
</dbReference>
<dbReference type="InterPro" id="IPR003439">
    <property type="entry name" value="ABC_transporter-like_ATP-bd"/>
</dbReference>
<dbReference type="InterPro" id="IPR017871">
    <property type="entry name" value="ABC_transporter-like_CS"/>
</dbReference>
<dbReference type="InterPro" id="IPR027417">
    <property type="entry name" value="P-loop_NTPase"/>
</dbReference>
<dbReference type="InterPro" id="IPR005670">
    <property type="entry name" value="PstB-like"/>
</dbReference>
<dbReference type="NCBIfam" id="TIGR00972">
    <property type="entry name" value="3a0107s01c2"/>
    <property type="match status" value="1"/>
</dbReference>
<dbReference type="PANTHER" id="PTHR43423">
    <property type="entry name" value="ABC TRANSPORTER I FAMILY MEMBER 17"/>
    <property type="match status" value="1"/>
</dbReference>
<dbReference type="PANTHER" id="PTHR43423:SF10">
    <property type="entry name" value="PHOSPHATE IMPORT ATP-BINDING PROTEIN PSTB 2"/>
    <property type="match status" value="1"/>
</dbReference>
<dbReference type="Pfam" id="PF00005">
    <property type="entry name" value="ABC_tran"/>
    <property type="match status" value="1"/>
</dbReference>
<dbReference type="SMART" id="SM00382">
    <property type="entry name" value="AAA"/>
    <property type="match status" value="1"/>
</dbReference>
<dbReference type="SUPFAM" id="SSF52540">
    <property type="entry name" value="P-loop containing nucleoside triphosphate hydrolases"/>
    <property type="match status" value="1"/>
</dbReference>
<dbReference type="PROSITE" id="PS00211">
    <property type="entry name" value="ABC_TRANSPORTER_1"/>
    <property type="match status" value="1"/>
</dbReference>
<dbReference type="PROSITE" id="PS50893">
    <property type="entry name" value="ABC_TRANSPORTER_2"/>
    <property type="match status" value="1"/>
</dbReference>
<dbReference type="PROSITE" id="PS51238">
    <property type="entry name" value="PSTB"/>
    <property type="match status" value="1"/>
</dbReference>
<keyword id="KW-0067">ATP-binding</keyword>
<keyword id="KW-1003">Cell membrane</keyword>
<keyword id="KW-0472">Membrane</keyword>
<keyword id="KW-0547">Nucleotide-binding</keyword>
<keyword id="KW-0592">Phosphate transport</keyword>
<keyword id="KW-1185">Reference proteome</keyword>
<keyword id="KW-1278">Translocase</keyword>
<keyword id="KW-0813">Transport</keyword>
<feature type="chain" id="PRO_0000092896" description="Phosphate import ATP-binding protein PstB 2">
    <location>
        <begin position="1"/>
        <end position="267"/>
    </location>
</feature>
<feature type="domain" description="ABC transporter" evidence="1">
    <location>
        <begin position="21"/>
        <end position="262"/>
    </location>
</feature>
<feature type="binding site" evidence="1">
    <location>
        <begin position="53"/>
        <end position="60"/>
    </location>
    <ligand>
        <name>ATP</name>
        <dbReference type="ChEBI" id="CHEBI:30616"/>
    </ligand>
</feature>